<proteinExistence type="inferred from homology"/>
<accession>B6YWD6</accession>
<gene>
    <name evidence="1" type="primary">purA</name>
    <name type="ordered locus">TON_0911</name>
</gene>
<feature type="chain" id="PRO_1000089346" description="Adenylosuccinate synthetase">
    <location>
        <begin position="1"/>
        <end position="339"/>
    </location>
</feature>
<feature type="active site" description="Proton acceptor" evidence="1">
    <location>
        <position position="13"/>
    </location>
</feature>
<feature type="active site" description="Proton donor" evidence="1">
    <location>
        <position position="43"/>
    </location>
</feature>
<feature type="binding site" evidence="1">
    <location>
        <begin position="12"/>
        <end position="18"/>
    </location>
    <ligand>
        <name>GTP</name>
        <dbReference type="ChEBI" id="CHEBI:37565"/>
    </ligand>
</feature>
<feature type="binding site" description="in other chain" evidence="1">
    <location>
        <begin position="13"/>
        <end position="16"/>
    </location>
    <ligand>
        <name>IMP</name>
        <dbReference type="ChEBI" id="CHEBI:58053"/>
        <note>ligand shared between dimeric partners</note>
    </ligand>
</feature>
<feature type="binding site" evidence="1">
    <location>
        <position position="13"/>
    </location>
    <ligand>
        <name>Mg(2+)</name>
        <dbReference type="ChEBI" id="CHEBI:18420"/>
    </ligand>
</feature>
<feature type="binding site" description="in other chain" evidence="1">
    <location>
        <begin position="40"/>
        <end position="43"/>
    </location>
    <ligand>
        <name>IMP</name>
        <dbReference type="ChEBI" id="CHEBI:58053"/>
        <note>ligand shared between dimeric partners</note>
    </ligand>
</feature>
<feature type="binding site" evidence="1">
    <location>
        <begin position="42"/>
        <end position="44"/>
    </location>
    <ligand>
        <name>GTP</name>
        <dbReference type="ChEBI" id="CHEBI:37565"/>
    </ligand>
</feature>
<feature type="binding site" evidence="1">
    <location>
        <position position="42"/>
    </location>
    <ligand>
        <name>Mg(2+)</name>
        <dbReference type="ChEBI" id="CHEBI:18420"/>
    </ligand>
</feature>
<feature type="binding site" description="in other chain" evidence="1">
    <location>
        <position position="127"/>
    </location>
    <ligand>
        <name>IMP</name>
        <dbReference type="ChEBI" id="CHEBI:58053"/>
        <note>ligand shared between dimeric partners</note>
    </ligand>
</feature>
<feature type="binding site" evidence="1">
    <location>
        <position position="141"/>
    </location>
    <ligand>
        <name>IMP</name>
        <dbReference type="ChEBI" id="CHEBI:58053"/>
        <note>ligand shared between dimeric partners</note>
    </ligand>
</feature>
<feature type="binding site" description="in other chain" evidence="1">
    <location>
        <position position="179"/>
    </location>
    <ligand>
        <name>IMP</name>
        <dbReference type="ChEBI" id="CHEBI:58053"/>
        <note>ligand shared between dimeric partners</note>
    </ligand>
</feature>
<feature type="binding site" description="in other chain" evidence="1">
    <location>
        <position position="194"/>
    </location>
    <ligand>
        <name>IMP</name>
        <dbReference type="ChEBI" id="CHEBI:58053"/>
        <note>ligand shared between dimeric partners</note>
    </ligand>
</feature>
<feature type="binding site" evidence="1">
    <location>
        <begin position="252"/>
        <end position="258"/>
    </location>
    <ligand>
        <name>substrate</name>
    </ligand>
</feature>
<feature type="binding site" description="in other chain" evidence="1">
    <location>
        <position position="256"/>
    </location>
    <ligand>
        <name>IMP</name>
        <dbReference type="ChEBI" id="CHEBI:58053"/>
        <note>ligand shared between dimeric partners</note>
    </ligand>
</feature>
<feature type="binding site" evidence="1">
    <location>
        <position position="258"/>
    </location>
    <ligand>
        <name>GTP</name>
        <dbReference type="ChEBI" id="CHEBI:37565"/>
    </ligand>
</feature>
<feature type="binding site" evidence="1">
    <location>
        <begin position="284"/>
        <end position="286"/>
    </location>
    <ligand>
        <name>GTP</name>
        <dbReference type="ChEBI" id="CHEBI:37565"/>
    </ligand>
</feature>
<feature type="binding site" evidence="1">
    <location>
        <begin position="324"/>
        <end position="326"/>
    </location>
    <ligand>
        <name>GTP</name>
        <dbReference type="ChEBI" id="CHEBI:37565"/>
    </ligand>
</feature>
<reference key="1">
    <citation type="journal article" date="2008" name="J. Bacteriol.">
        <title>The complete genome sequence of Thermococcus onnurineus NA1 reveals a mixed heterotrophic and carboxydotrophic metabolism.</title>
        <authorList>
            <person name="Lee H.S."/>
            <person name="Kang S.G."/>
            <person name="Bae S.S."/>
            <person name="Lim J.K."/>
            <person name="Cho Y."/>
            <person name="Kim Y.J."/>
            <person name="Jeon J.H."/>
            <person name="Cha S.-S."/>
            <person name="Kwon K.K."/>
            <person name="Kim H.-T."/>
            <person name="Park C.-J."/>
            <person name="Lee H.-W."/>
            <person name="Kim S.I."/>
            <person name="Chun J."/>
            <person name="Colwell R.R."/>
            <person name="Kim S.-J."/>
            <person name="Lee J.-H."/>
        </authorList>
    </citation>
    <scope>NUCLEOTIDE SEQUENCE [LARGE SCALE GENOMIC DNA]</scope>
    <source>
        <strain>NA1</strain>
    </source>
</reference>
<protein>
    <recommendedName>
        <fullName evidence="1">Adenylosuccinate synthetase</fullName>
        <shortName evidence="1">AMPSase</shortName>
        <shortName evidence="1">AdSS</shortName>
        <ecNumber evidence="1">6.3.4.4</ecNumber>
    </recommendedName>
    <alternativeName>
        <fullName evidence="1">IMP--aspartate ligase</fullName>
    </alternativeName>
</protein>
<organism>
    <name type="scientific">Thermococcus onnurineus (strain NA1)</name>
    <dbReference type="NCBI Taxonomy" id="523850"/>
    <lineage>
        <taxon>Archaea</taxon>
        <taxon>Methanobacteriati</taxon>
        <taxon>Methanobacteriota</taxon>
        <taxon>Thermococci</taxon>
        <taxon>Thermococcales</taxon>
        <taxon>Thermococcaceae</taxon>
        <taxon>Thermococcus</taxon>
    </lineage>
</organism>
<keyword id="KW-0963">Cytoplasm</keyword>
<keyword id="KW-0342">GTP-binding</keyword>
<keyword id="KW-0436">Ligase</keyword>
<keyword id="KW-0460">Magnesium</keyword>
<keyword id="KW-0479">Metal-binding</keyword>
<keyword id="KW-0547">Nucleotide-binding</keyword>
<keyword id="KW-0658">Purine biosynthesis</keyword>
<evidence type="ECO:0000255" key="1">
    <source>
        <dbReference type="HAMAP-Rule" id="MF_00011"/>
    </source>
</evidence>
<name>PURA_THEON</name>
<dbReference type="EC" id="6.3.4.4" evidence="1"/>
<dbReference type="EMBL" id="CP000855">
    <property type="protein sequence ID" value="ACJ16399.1"/>
    <property type="molecule type" value="Genomic_DNA"/>
</dbReference>
<dbReference type="RefSeq" id="WP_012571871.1">
    <property type="nucleotide sequence ID" value="NC_011529.1"/>
</dbReference>
<dbReference type="SMR" id="B6YWD6"/>
<dbReference type="STRING" id="523850.TON_0911"/>
<dbReference type="GeneID" id="7017214"/>
<dbReference type="KEGG" id="ton:TON_0911"/>
<dbReference type="PATRIC" id="fig|523850.10.peg.919"/>
<dbReference type="eggNOG" id="arCOG04387">
    <property type="taxonomic scope" value="Archaea"/>
</dbReference>
<dbReference type="HOGENOM" id="CLU_029848_0_0_2"/>
<dbReference type="OrthoDB" id="372247at2157"/>
<dbReference type="UniPathway" id="UPA00075">
    <property type="reaction ID" value="UER00335"/>
</dbReference>
<dbReference type="Proteomes" id="UP000002727">
    <property type="component" value="Chromosome"/>
</dbReference>
<dbReference type="GO" id="GO:0005737">
    <property type="term" value="C:cytoplasm"/>
    <property type="evidence" value="ECO:0007669"/>
    <property type="project" value="UniProtKB-SubCell"/>
</dbReference>
<dbReference type="GO" id="GO:0004019">
    <property type="term" value="F:adenylosuccinate synthase activity"/>
    <property type="evidence" value="ECO:0007669"/>
    <property type="project" value="UniProtKB-UniRule"/>
</dbReference>
<dbReference type="GO" id="GO:0005525">
    <property type="term" value="F:GTP binding"/>
    <property type="evidence" value="ECO:0007669"/>
    <property type="project" value="UniProtKB-UniRule"/>
</dbReference>
<dbReference type="GO" id="GO:0000287">
    <property type="term" value="F:magnesium ion binding"/>
    <property type="evidence" value="ECO:0007669"/>
    <property type="project" value="UniProtKB-UniRule"/>
</dbReference>
<dbReference type="GO" id="GO:0044208">
    <property type="term" value="P:'de novo' AMP biosynthetic process"/>
    <property type="evidence" value="ECO:0007669"/>
    <property type="project" value="UniProtKB-UniRule"/>
</dbReference>
<dbReference type="GO" id="GO:0046040">
    <property type="term" value="P:IMP metabolic process"/>
    <property type="evidence" value="ECO:0007669"/>
    <property type="project" value="TreeGrafter"/>
</dbReference>
<dbReference type="CDD" id="cd03108">
    <property type="entry name" value="AdSS"/>
    <property type="match status" value="1"/>
</dbReference>
<dbReference type="FunFam" id="3.40.440.10:FF:000005">
    <property type="entry name" value="Adenylosuccinate synthetase"/>
    <property type="match status" value="1"/>
</dbReference>
<dbReference type="FunFam" id="3.40.440.10:FF:000007">
    <property type="entry name" value="Adenylosuccinate synthetase"/>
    <property type="match status" value="1"/>
</dbReference>
<dbReference type="FunFam" id="3.90.170.10:FF:000002">
    <property type="entry name" value="Adenylosuccinate synthetase"/>
    <property type="match status" value="1"/>
</dbReference>
<dbReference type="Gene3D" id="3.40.440.10">
    <property type="entry name" value="Adenylosuccinate Synthetase, subunit A, domain 1"/>
    <property type="match status" value="2"/>
</dbReference>
<dbReference type="Gene3D" id="3.90.170.10">
    <property type="entry name" value="Adenylosuccinate Synthetase, subunit A, domain 3"/>
    <property type="match status" value="2"/>
</dbReference>
<dbReference type="HAMAP" id="MF_00011">
    <property type="entry name" value="Adenylosucc_synth"/>
    <property type="match status" value="1"/>
</dbReference>
<dbReference type="InterPro" id="IPR018220">
    <property type="entry name" value="Adenylosuccin_syn_GTP-bd"/>
</dbReference>
<dbReference type="InterPro" id="IPR042109">
    <property type="entry name" value="Adenylosuccinate_synth_dom1"/>
</dbReference>
<dbReference type="InterPro" id="IPR042111">
    <property type="entry name" value="Adenylosuccinate_synth_dom3"/>
</dbReference>
<dbReference type="InterPro" id="IPR001114">
    <property type="entry name" value="Adenylosuccinate_synthetase"/>
</dbReference>
<dbReference type="InterPro" id="IPR027417">
    <property type="entry name" value="P-loop_NTPase"/>
</dbReference>
<dbReference type="NCBIfam" id="NF003295">
    <property type="entry name" value="PRK04293.1"/>
    <property type="match status" value="1"/>
</dbReference>
<dbReference type="PANTHER" id="PTHR11846">
    <property type="entry name" value="ADENYLOSUCCINATE SYNTHETASE"/>
    <property type="match status" value="1"/>
</dbReference>
<dbReference type="PANTHER" id="PTHR11846:SF0">
    <property type="entry name" value="ADENYLOSUCCINATE SYNTHETASE"/>
    <property type="match status" value="1"/>
</dbReference>
<dbReference type="Pfam" id="PF00709">
    <property type="entry name" value="Adenylsucc_synt"/>
    <property type="match status" value="1"/>
</dbReference>
<dbReference type="SMART" id="SM00788">
    <property type="entry name" value="Adenylsucc_synt"/>
    <property type="match status" value="1"/>
</dbReference>
<dbReference type="SUPFAM" id="SSF52540">
    <property type="entry name" value="P-loop containing nucleoside triphosphate hydrolases"/>
    <property type="match status" value="1"/>
</dbReference>
<dbReference type="PROSITE" id="PS01266">
    <property type="entry name" value="ADENYLOSUCCIN_SYN_1"/>
    <property type="match status" value="1"/>
</dbReference>
<comment type="function">
    <text evidence="1">Plays an important role in the de novo pathway of purine nucleotide biosynthesis. Catalyzes the first committed step in the biosynthesis of AMP from IMP.</text>
</comment>
<comment type="catalytic activity">
    <reaction evidence="1">
        <text>IMP + L-aspartate + GTP = N(6)-(1,2-dicarboxyethyl)-AMP + GDP + phosphate + 2 H(+)</text>
        <dbReference type="Rhea" id="RHEA:15753"/>
        <dbReference type="ChEBI" id="CHEBI:15378"/>
        <dbReference type="ChEBI" id="CHEBI:29991"/>
        <dbReference type="ChEBI" id="CHEBI:37565"/>
        <dbReference type="ChEBI" id="CHEBI:43474"/>
        <dbReference type="ChEBI" id="CHEBI:57567"/>
        <dbReference type="ChEBI" id="CHEBI:58053"/>
        <dbReference type="ChEBI" id="CHEBI:58189"/>
        <dbReference type="EC" id="6.3.4.4"/>
    </reaction>
</comment>
<comment type="cofactor">
    <cofactor evidence="1">
        <name>Mg(2+)</name>
        <dbReference type="ChEBI" id="CHEBI:18420"/>
    </cofactor>
    <text evidence="1">Binds 1 Mg(2+) ion per subunit.</text>
</comment>
<comment type="pathway">
    <text evidence="1">Purine metabolism; AMP biosynthesis via de novo pathway; AMP from IMP: step 1/2.</text>
</comment>
<comment type="subunit">
    <text evidence="1">Homodimer.</text>
</comment>
<comment type="subcellular location">
    <subcellularLocation>
        <location evidence="1">Cytoplasm</location>
    </subcellularLocation>
</comment>
<comment type="similarity">
    <text evidence="1">Belongs to the adenylosuccinate synthetase family.</text>
</comment>
<sequence length="339" mass="37360">MPSYIVVGGQWGDEGKGSLIAYLALKDEPQIIARGGVGTNAGHSVFINGRKYAVRQLPTGFMQTKARLLVGAGVLVDPGVFFHELEHLKEFNVAERVGIDYRCAIIEPRHKERDRASSYLHDKIGTTGSGCGPANADRVMRMAKQAKDIKELEPYLTDVAQEINDALDEGKLVLIEGTQGFGLSLYYGTYPYVTSKDTTASAIASDVGIGPTRVDDVIVVFKSFPTRVGEGPFPTEMSAEEAERLGLVEYGTVTGRRRRVGWFDFEFARYSARLNGATMLAITMLDKYDKGAFGVTDYDKLPRKAKEFIEEIEERVGIPVGIIKTGPELEHVIDRRDTL</sequence>